<evidence type="ECO:0000250" key="1"/>
<evidence type="ECO:0000305" key="2"/>
<comment type="function">
    <text evidence="1">Removes the phosphate from trehalose 6-phosphate to produce free trehalose. Trehalose accumulation in plant may improve abiotic stress tolerance (By similarity).</text>
</comment>
<comment type="catalytic activity">
    <reaction>
        <text>alpha,alpha-trehalose 6-phosphate + H2O = alpha,alpha-trehalose + phosphate</text>
        <dbReference type="Rhea" id="RHEA:23420"/>
        <dbReference type="ChEBI" id="CHEBI:15377"/>
        <dbReference type="ChEBI" id="CHEBI:16551"/>
        <dbReference type="ChEBI" id="CHEBI:43474"/>
        <dbReference type="ChEBI" id="CHEBI:58429"/>
        <dbReference type="EC" id="3.1.3.12"/>
    </reaction>
</comment>
<comment type="cofactor">
    <cofactor evidence="1">
        <name>a divalent metal cation</name>
        <dbReference type="ChEBI" id="CHEBI:60240"/>
    </cofactor>
</comment>
<comment type="pathway">
    <text>Glycan biosynthesis; trehalose biosynthesis.</text>
</comment>
<comment type="similarity">
    <text evidence="2">Belongs to the trehalose phosphatase family.</text>
</comment>
<comment type="sequence caution" evidence="2">
    <conflict type="erroneous gene model prediction">
        <sequence resource="EMBL-CDS" id="BAH94299"/>
    </conflict>
</comment>
<sequence length="370" mass="40996">MTKQSVVVPEVAVPMPPNSAPLLPYPPPRAAPGVAVRKKYLQAQLDLGAGLPLINGWVESMRASSPTHAKAAAALAAAGAVDDERAAWMVRHPSALSKFEQIVAASKGKKIVMFLDYDGTLSPIVDDPDSAFMSDTMRRAVRSVAKHFPTAIVSGRCRDKVFEFVKLAELYYAGSHGMDIKGPAKASRHNKAKAKGVLFQPASEFLPMIEQVHDSLIERTKCIPGAKVENNKFCVSVHFRCVDEKSWSTLADIVKAELKDYPKLKLTQGRMVFEIRPTIKWDKGKALEFLLESLGFADCTNVLPVYIGDDRTDEDAFKVLRKRGQGIGILVSKYPKDTNASYSLQEPAEVMEFLLRLVEWERLSRARPKW</sequence>
<keyword id="KW-0378">Hydrolase</keyword>
<keyword id="KW-1185">Reference proteome</keyword>
<keyword id="KW-0346">Stress response</keyword>
<protein>
    <recommendedName>
        <fullName>Probable trehalose-phosphate phosphatase 6</fullName>
        <shortName>OsTPP6</shortName>
        <ecNumber>3.1.3.12</ecNumber>
    </recommendedName>
    <alternativeName>
        <fullName>Trehalose 6-phosphate phosphatase</fullName>
    </alternativeName>
</protein>
<organism>
    <name type="scientific">Oryza sativa subsp. japonica</name>
    <name type="common">Rice</name>
    <dbReference type="NCBI Taxonomy" id="39947"/>
    <lineage>
        <taxon>Eukaryota</taxon>
        <taxon>Viridiplantae</taxon>
        <taxon>Streptophyta</taxon>
        <taxon>Embryophyta</taxon>
        <taxon>Tracheophyta</taxon>
        <taxon>Spermatophyta</taxon>
        <taxon>Magnoliopsida</taxon>
        <taxon>Liliopsida</taxon>
        <taxon>Poales</taxon>
        <taxon>Poaceae</taxon>
        <taxon>BOP clade</taxon>
        <taxon>Oryzoideae</taxon>
        <taxon>Oryzeae</taxon>
        <taxon>Oryzinae</taxon>
        <taxon>Oryza</taxon>
        <taxon>Oryza sativa</taxon>
    </lineage>
</organism>
<dbReference type="EC" id="3.1.3.12"/>
<dbReference type="EMBL" id="AP004658">
    <property type="protein sequence ID" value="BAC99626.1"/>
    <property type="molecule type" value="Genomic_DNA"/>
</dbReference>
<dbReference type="EMBL" id="AP008214">
    <property type="protein sequence ID" value="BAH94299.1"/>
    <property type="status" value="ALT_SEQ"/>
    <property type="molecule type" value="Genomic_DNA"/>
</dbReference>
<dbReference type="EMBL" id="AP014964">
    <property type="protein sequence ID" value="BAT05384.1"/>
    <property type="molecule type" value="Genomic_DNA"/>
</dbReference>
<dbReference type="EMBL" id="AK243504">
    <property type="protein sequence ID" value="BAH01631.1"/>
    <property type="molecule type" value="mRNA"/>
</dbReference>
<dbReference type="RefSeq" id="XP_015650924.1">
    <property type="nucleotide sequence ID" value="XM_015795438.1"/>
</dbReference>
<dbReference type="SMR" id="Q6ZAL2"/>
<dbReference type="FunCoup" id="Q6ZAL2">
    <property type="interactions" value="140"/>
</dbReference>
<dbReference type="STRING" id="39947.Q6ZAL2"/>
<dbReference type="PaxDb" id="39947-Q6ZAL2"/>
<dbReference type="EnsemblPlants" id="Os08t0409100-01">
    <property type="protein sequence ID" value="Os08t0409100-01"/>
    <property type="gene ID" value="Os08g0409100"/>
</dbReference>
<dbReference type="Gramene" id="Os08t0409100-01">
    <property type="protein sequence ID" value="Os08t0409100-01"/>
    <property type="gene ID" value="Os08g0409100"/>
</dbReference>
<dbReference type="KEGG" id="dosa:Os08g0409100"/>
<dbReference type="eggNOG" id="KOG1050">
    <property type="taxonomic scope" value="Eukaryota"/>
</dbReference>
<dbReference type="HOGENOM" id="CLU_037265_1_2_1"/>
<dbReference type="InParanoid" id="Q6ZAL2"/>
<dbReference type="OMA" id="FQAANEF"/>
<dbReference type="OrthoDB" id="411251at2759"/>
<dbReference type="UniPathway" id="UPA00299"/>
<dbReference type="Proteomes" id="UP000000763">
    <property type="component" value="Chromosome 8"/>
</dbReference>
<dbReference type="Proteomes" id="UP000059680">
    <property type="component" value="Chromosome 8"/>
</dbReference>
<dbReference type="GO" id="GO:0004805">
    <property type="term" value="F:trehalose-phosphatase activity"/>
    <property type="evidence" value="ECO:0000318"/>
    <property type="project" value="GO_Central"/>
</dbReference>
<dbReference type="GO" id="GO:0005992">
    <property type="term" value="P:trehalose biosynthetic process"/>
    <property type="evidence" value="ECO:0000318"/>
    <property type="project" value="GO_Central"/>
</dbReference>
<dbReference type="CDD" id="cd01627">
    <property type="entry name" value="HAD_TPP"/>
    <property type="match status" value="1"/>
</dbReference>
<dbReference type="FunFam" id="3.40.50.1000:FF:000073">
    <property type="entry name" value="Trehalose 6-phosphate phosphatase"/>
    <property type="match status" value="1"/>
</dbReference>
<dbReference type="FunFam" id="3.40.50.1000:FF:000161">
    <property type="entry name" value="Trehalose 6-phosphate phosphatase"/>
    <property type="match status" value="1"/>
</dbReference>
<dbReference type="Gene3D" id="3.40.50.1000">
    <property type="entry name" value="HAD superfamily/HAD-like"/>
    <property type="match status" value="2"/>
</dbReference>
<dbReference type="InterPro" id="IPR036412">
    <property type="entry name" value="HAD-like_sf"/>
</dbReference>
<dbReference type="InterPro" id="IPR006379">
    <property type="entry name" value="HAD-SF_hydro_IIB"/>
</dbReference>
<dbReference type="InterPro" id="IPR023214">
    <property type="entry name" value="HAD_sf"/>
</dbReference>
<dbReference type="InterPro" id="IPR044651">
    <property type="entry name" value="OTSB-like"/>
</dbReference>
<dbReference type="InterPro" id="IPR003337">
    <property type="entry name" value="Trehalose_PPase"/>
</dbReference>
<dbReference type="NCBIfam" id="TIGR01484">
    <property type="entry name" value="HAD-SF-IIB"/>
    <property type="match status" value="1"/>
</dbReference>
<dbReference type="NCBIfam" id="TIGR00685">
    <property type="entry name" value="T6PP"/>
    <property type="match status" value="1"/>
</dbReference>
<dbReference type="PANTHER" id="PTHR43768">
    <property type="entry name" value="TREHALOSE 6-PHOSPHATE PHOSPHATASE"/>
    <property type="match status" value="1"/>
</dbReference>
<dbReference type="PANTHER" id="PTHR43768:SF19">
    <property type="entry name" value="TREHALOSE-PHOSPHATE PHOSPHATASE 6-RELATED"/>
    <property type="match status" value="1"/>
</dbReference>
<dbReference type="Pfam" id="PF02358">
    <property type="entry name" value="Trehalose_PPase"/>
    <property type="match status" value="1"/>
</dbReference>
<dbReference type="SUPFAM" id="SSF56784">
    <property type="entry name" value="HAD-like"/>
    <property type="match status" value="1"/>
</dbReference>
<feature type="chain" id="PRO_0000417658" description="Probable trehalose-phosphate phosphatase 6">
    <location>
        <begin position="1"/>
        <end position="370"/>
    </location>
</feature>
<reference key="1">
    <citation type="journal article" date="2005" name="Nature">
        <title>The map-based sequence of the rice genome.</title>
        <authorList>
            <consortium name="International rice genome sequencing project (IRGSP)"/>
        </authorList>
    </citation>
    <scope>NUCLEOTIDE SEQUENCE [LARGE SCALE GENOMIC DNA]</scope>
    <source>
        <strain>cv. Nipponbare</strain>
    </source>
</reference>
<reference key="2">
    <citation type="journal article" date="2008" name="Nucleic Acids Res.">
        <title>The rice annotation project database (RAP-DB): 2008 update.</title>
        <authorList>
            <consortium name="The rice annotation project (RAP)"/>
        </authorList>
    </citation>
    <scope>GENOME REANNOTATION</scope>
    <source>
        <strain>cv. Nipponbare</strain>
    </source>
</reference>
<reference key="3">
    <citation type="journal article" date="2013" name="Rice">
        <title>Improvement of the Oryza sativa Nipponbare reference genome using next generation sequence and optical map data.</title>
        <authorList>
            <person name="Kawahara Y."/>
            <person name="de la Bastide M."/>
            <person name="Hamilton J.P."/>
            <person name="Kanamori H."/>
            <person name="McCombie W.R."/>
            <person name="Ouyang S."/>
            <person name="Schwartz D.C."/>
            <person name="Tanaka T."/>
            <person name="Wu J."/>
            <person name="Zhou S."/>
            <person name="Childs K.L."/>
            <person name="Davidson R.M."/>
            <person name="Lin H."/>
            <person name="Quesada-Ocampo L."/>
            <person name="Vaillancourt B."/>
            <person name="Sakai H."/>
            <person name="Lee S.S."/>
            <person name="Kim J."/>
            <person name="Numa H."/>
            <person name="Itoh T."/>
            <person name="Buell C.R."/>
            <person name="Matsumoto T."/>
        </authorList>
    </citation>
    <scope>GENOME REANNOTATION</scope>
    <source>
        <strain>cv. Nipponbare</strain>
    </source>
</reference>
<reference key="4">
    <citation type="submission" date="2006-10" db="EMBL/GenBank/DDBJ databases">
        <title>Oryza sativa full length cDNA.</title>
        <authorList>
            <consortium name="The rice full-length cDNA consortium"/>
        </authorList>
    </citation>
    <scope>NUCLEOTIDE SEQUENCE [LARGE SCALE MRNA]</scope>
    <source>
        <strain>cv. Nipponbare</strain>
    </source>
</reference>
<reference key="5">
    <citation type="journal article" date="2005" name="Plant Mol. Biol.">
        <title>Functional identification of a trehalose 6-phosphate phosphatase gene that is involved in transient induction of trehalose biosynthesis during chilling stress in rice.</title>
        <authorList>
            <person name="Pramanik M.H."/>
            <person name="Imai R."/>
        </authorList>
    </citation>
    <scope>GENE FAMILY</scope>
    <scope>NOMENCLATURE</scope>
    <source>
        <strain>cv. Yukihikari</strain>
    </source>
</reference>
<proteinExistence type="evidence at transcript level"/>
<gene>
    <name type="primary">TPP6</name>
    <name type="ordered locus">Os08g0409100</name>
    <name type="ordered locus">LOC_Os08g31630</name>
    <name type="ORF">P0042B03.17</name>
</gene>
<accession>Q6ZAL2</accession>
<accession>A0A0P0XFI9</accession>
<accession>C7J5L3</accession>
<name>TPP6_ORYSJ</name>